<comment type="function">
    <text evidence="1 5 6 8">Polycomb group (PcG) protein. PcG proteins act by forming multiprotein complexes, which are required to maintain the transcriptionally repressive state of homeotic genes throughout development. PcG proteins are not required to initiate repression, but to maintain it during later stages of development. They probably act via the methylation of histones, rendering chromatin heritably changed in its expressibility. Required to prevent the proliferation of the central cell by repressing unknown target genes before fertilization. Probably also involved in floral repression mechanism established during early plant development. Regulates the anteroposterior organization of the endosperm. Interacts with the promoter and represses the transcription of genes such as PHE1, that are paternally active and maternally silenced.</text>
</comment>
<comment type="subunit">
    <text evidence="2 3 4 7 9 10">Interacts directly with MEA. These two proteins are probably indirectly associated with FIS2. In plants, PcG complexes are probably composed of a member of the EZ family (CLF or MEA), FIE, and a member of the VEFS family (FIS2, VRN2 or EMF2). Component of the plant homeodomain / polycomb repressive complex 2 (PHD-PRC2) large complex during prolonged cold, composed of core PRC2 components (VRN2, EZA1, FIE and MSI1), and three related PHD finger proteins (VIL1, VIL2 and VIN3) that mediates histone H3 trimethylation on 'Lys-27' (H3K27me3). Binds to ALP1 (PubMed:26642436).</text>
</comment>
<comment type="interaction">
    <interactant intactId="EBI-307146">
        <id>Q9LT47</id>
    </interactant>
    <interactant intactId="EBI-307155">
        <id>P93831</id>
        <label>CLF</label>
    </interactant>
    <organismsDiffer>false</organismsDiffer>
    <experiments>4</experiments>
</comment>
<comment type="interaction">
    <interactant intactId="EBI-307146">
        <id>Q9LT47</id>
    </interactant>
    <interactant intactId="EBI-632832">
        <id>O65312</id>
        <label>MEA</label>
    </interactant>
    <organismsDiffer>false</organismsDiffer>
    <experiments>12</experiments>
</comment>
<comment type="interaction">
    <interactant intactId="EBI-307146">
        <id>Q9LT47</id>
    </interactant>
    <interactant intactId="EBI-632891">
        <id>O22467</id>
        <label>MSI1</label>
    </interactant>
    <organismsDiffer>false</organismsDiffer>
    <experiments>6</experiments>
</comment>
<comment type="interaction">
    <interactant intactId="EBI-307146">
        <id>Q9LT47</id>
    </interactant>
    <interactant intactId="EBI-398590">
        <id>Q9LKZ3</id>
        <label>RBR1</label>
    </interactant>
    <organismsDiffer>false</organismsDiffer>
    <experiments>2</experiments>
</comment>
<comment type="interaction">
    <interactant intactId="EBI-307146">
        <id>Q9LT47</id>
    </interactant>
    <interactant intactId="EBI-2128880">
        <id>Q8W5B1</id>
        <label>VRN2</label>
    </interactant>
    <organismsDiffer>false</organismsDiffer>
    <experiments>3</experiments>
</comment>
<comment type="subcellular location">
    <subcellularLocation>
        <location evidence="3">Nucleus</location>
    </subcellularLocation>
    <text>Excluded from the nucleolus.</text>
</comment>
<comment type="tissue specificity">
    <text evidence="1 2 3 4">Expressed in cauline leaves, root and stems. In the male reproductive organ, it is expressed in the developing anther; and is abundant in microspore mother cells, in microsporocytes and in the tapetum, but is absent from vascular bundles, the connective tissue and the filament. It is also absent from pollen grains at subsequent developmental stages. In the developing female reproductive organs, it is highly expressed in all cells of the young ovules primordium before archesporial differentiation. Then, it is highly expressed in the ovule sporophytic tissue and the megaspore mother cell before meiosis, but is absent from placenta or the developing carpel. Then, it decreases.</text>
</comment>
<comment type="developmental stage">
    <text>Expressed maternally and zygotically. Expressed in both egg and central cell before fertilization, and in the embryo and endosperm after fertilization.</text>
</comment>
<comment type="similarity">
    <text evidence="11">Belongs to the WD repeat ESC family.</text>
</comment>
<comment type="sequence caution" evidence="11">
    <conflict type="erroneous gene model prediction">
        <sequence resource="EMBL-CDS" id="BAB02481"/>
    </conflict>
</comment>
<organism>
    <name type="scientific">Arabidopsis thaliana</name>
    <name type="common">Mouse-ear cress</name>
    <dbReference type="NCBI Taxonomy" id="3702"/>
    <lineage>
        <taxon>Eukaryota</taxon>
        <taxon>Viridiplantae</taxon>
        <taxon>Streptophyta</taxon>
        <taxon>Embryophyta</taxon>
        <taxon>Tracheophyta</taxon>
        <taxon>Spermatophyta</taxon>
        <taxon>Magnoliopsida</taxon>
        <taxon>eudicotyledons</taxon>
        <taxon>Gunneridae</taxon>
        <taxon>Pentapetalae</taxon>
        <taxon>rosids</taxon>
        <taxon>malvids</taxon>
        <taxon>Brassicales</taxon>
        <taxon>Brassicaceae</taxon>
        <taxon>Camelineae</taxon>
        <taxon>Arabidopsis</taxon>
    </lineage>
</organism>
<sequence length="369" mass="41257">MSKITLGNESIVGSLTPSNKKSYKVTNRIQEGKKPLYAVVFNFLDARFFDVFVTAGGNRITLYNCLGDGAISALQSYADEDKEESFYTVSWACGVNGNPYVAAGGVKGIIRVIDVNSETIHKSLVGHGDSVNEIRTQPLKPQLVITASKDESVRLWNVETGICILIFAGAGGHRYEVLSVDFHPSDIYRFASCGMDTTIKIWSMKEFWTYVEKSFTWTDDPSKFPTKFVQFPVFTASIHTNYVDCNRWFGDFILSKSVDNEILLWEPQLKENSPGEGASDVLLRYPVPMCDIWFIKFSCDLHLSSVAIGNQEGKVYVWDLKSCPPVLITKLSHNQSKSVIRQTAMSVDGSTILACCEDGTIWRWDVITK</sequence>
<keyword id="KW-0156">Chromatin regulator</keyword>
<keyword id="KW-0217">Developmental protein</keyword>
<keyword id="KW-0539">Nucleus</keyword>
<keyword id="KW-1185">Reference proteome</keyword>
<keyword id="KW-0677">Repeat</keyword>
<keyword id="KW-0678">Repressor</keyword>
<keyword id="KW-0804">Transcription</keyword>
<keyword id="KW-0805">Transcription regulation</keyword>
<keyword id="KW-0853">WD repeat</keyword>
<gene>
    <name type="primary">FIE</name>
    <name type="synonym">FIS3</name>
    <name type="ordered locus">At3g20740</name>
    <name type="ORF">MOE17.5</name>
</gene>
<proteinExistence type="evidence at protein level"/>
<protein>
    <recommendedName>
        <fullName>Polycomb group protein FERTILIZATION-INDEPENDENT ENDOSPERM</fullName>
    </recommendedName>
    <alternativeName>
        <fullName>Protein FERTILIZATION-INDEPENDENT SEED 3</fullName>
    </alternativeName>
</protein>
<dbReference type="EMBL" id="AF129516">
    <property type="protein sequence ID" value="AAD23584.1"/>
    <property type="molecule type" value="mRNA"/>
</dbReference>
<dbReference type="EMBL" id="AB025629">
    <property type="protein sequence ID" value="BAB02481.1"/>
    <property type="status" value="ALT_SEQ"/>
    <property type="molecule type" value="Genomic_DNA"/>
</dbReference>
<dbReference type="EMBL" id="CP002686">
    <property type="protein sequence ID" value="AEE76418.1"/>
    <property type="molecule type" value="Genomic_DNA"/>
</dbReference>
<dbReference type="EMBL" id="AK117114">
    <property type="protein sequence ID" value="BAC41793.1"/>
    <property type="molecule type" value="mRNA"/>
</dbReference>
<dbReference type="EMBL" id="BT005326">
    <property type="protein sequence ID" value="AAO63390.1"/>
    <property type="molecule type" value="mRNA"/>
</dbReference>
<dbReference type="RefSeq" id="NP_188710.1">
    <property type="nucleotide sequence ID" value="NM_112965.1"/>
</dbReference>
<dbReference type="SMR" id="Q9LT47"/>
<dbReference type="BioGRID" id="6954">
    <property type="interactions" value="11"/>
</dbReference>
<dbReference type="DIP" id="DIP-31378N"/>
<dbReference type="FunCoup" id="Q9LT47">
    <property type="interactions" value="3675"/>
</dbReference>
<dbReference type="IntAct" id="Q9LT47">
    <property type="interactions" value="11"/>
</dbReference>
<dbReference type="STRING" id="3702.Q9LT47"/>
<dbReference type="iPTMnet" id="Q9LT47"/>
<dbReference type="PaxDb" id="3702-AT3G20740.1"/>
<dbReference type="ProteomicsDB" id="230511"/>
<dbReference type="EnsemblPlants" id="AT3G20740.1">
    <property type="protein sequence ID" value="AT3G20740.1"/>
    <property type="gene ID" value="AT3G20740"/>
</dbReference>
<dbReference type="GeneID" id="821622"/>
<dbReference type="Gramene" id="AT3G20740.1">
    <property type="protein sequence ID" value="AT3G20740.1"/>
    <property type="gene ID" value="AT3G20740"/>
</dbReference>
<dbReference type="KEGG" id="ath:AT3G20740"/>
<dbReference type="Araport" id="AT3G20740"/>
<dbReference type="TAIR" id="AT3G20740">
    <property type="gene designation" value="FIE"/>
</dbReference>
<dbReference type="eggNOG" id="KOG1034">
    <property type="taxonomic scope" value="Eukaryota"/>
</dbReference>
<dbReference type="HOGENOM" id="CLU_032683_2_0_1"/>
<dbReference type="InParanoid" id="Q9LT47"/>
<dbReference type="OMA" id="RDVHRNY"/>
<dbReference type="OrthoDB" id="7318948at2759"/>
<dbReference type="PhylomeDB" id="Q9LT47"/>
<dbReference type="PRO" id="PR:Q9LT47"/>
<dbReference type="Proteomes" id="UP000006548">
    <property type="component" value="Chromosome 3"/>
</dbReference>
<dbReference type="ExpressionAtlas" id="Q9LT47">
    <property type="expression patterns" value="baseline and differential"/>
</dbReference>
<dbReference type="GO" id="GO:0005677">
    <property type="term" value="C:chromatin silencing complex"/>
    <property type="evidence" value="ECO:0000314"/>
    <property type="project" value="UniProtKB"/>
</dbReference>
<dbReference type="GO" id="GO:0043078">
    <property type="term" value="C:polar nucleus"/>
    <property type="evidence" value="ECO:0000314"/>
    <property type="project" value="TAIR"/>
</dbReference>
<dbReference type="GO" id="GO:0003700">
    <property type="term" value="F:DNA-binding transcription factor activity"/>
    <property type="evidence" value="ECO:0000250"/>
    <property type="project" value="TAIR"/>
</dbReference>
<dbReference type="GO" id="GO:0006325">
    <property type="term" value="P:chromatin organization"/>
    <property type="evidence" value="ECO:0007669"/>
    <property type="project" value="UniProtKB-KW"/>
</dbReference>
<dbReference type="GO" id="GO:0009910">
    <property type="term" value="P:negative regulation of flower development"/>
    <property type="evidence" value="ECO:0000315"/>
    <property type="project" value="TAIR"/>
</dbReference>
<dbReference type="GO" id="GO:2000014">
    <property type="term" value="P:regulation of endosperm development"/>
    <property type="evidence" value="ECO:0000315"/>
    <property type="project" value="TAIR"/>
</dbReference>
<dbReference type="GO" id="GO:0009409">
    <property type="term" value="P:response to cold"/>
    <property type="evidence" value="ECO:0000270"/>
    <property type="project" value="TAIR"/>
</dbReference>
<dbReference type="GO" id="GO:0010048">
    <property type="term" value="P:vernalization response"/>
    <property type="evidence" value="ECO:0000315"/>
    <property type="project" value="TAIR"/>
</dbReference>
<dbReference type="FunFam" id="2.130.10.10:FF:000268">
    <property type="entry name" value="polycomb group protein FIE1"/>
    <property type="match status" value="1"/>
</dbReference>
<dbReference type="Gene3D" id="2.130.10.10">
    <property type="entry name" value="YVTN repeat-like/Quinoprotein amine dehydrogenase"/>
    <property type="match status" value="1"/>
</dbReference>
<dbReference type="InterPro" id="IPR020472">
    <property type="entry name" value="G-protein_beta_WD-40_rep"/>
</dbReference>
<dbReference type="InterPro" id="IPR051243">
    <property type="entry name" value="PcG_WD-repeat"/>
</dbReference>
<dbReference type="InterPro" id="IPR015943">
    <property type="entry name" value="WD40/YVTN_repeat-like_dom_sf"/>
</dbReference>
<dbReference type="InterPro" id="IPR019775">
    <property type="entry name" value="WD40_repeat_CS"/>
</dbReference>
<dbReference type="InterPro" id="IPR036322">
    <property type="entry name" value="WD40_repeat_dom_sf"/>
</dbReference>
<dbReference type="InterPro" id="IPR001680">
    <property type="entry name" value="WD40_rpt"/>
</dbReference>
<dbReference type="PANTHER" id="PTHR10253">
    <property type="entry name" value="POLYCOMB PROTEIN"/>
    <property type="match status" value="1"/>
</dbReference>
<dbReference type="Pfam" id="PF00400">
    <property type="entry name" value="WD40"/>
    <property type="match status" value="3"/>
</dbReference>
<dbReference type="PRINTS" id="PR00320">
    <property type="entry name" value="GPROTEINBRPT"/>
</dbReference>
<dbReference type="SMART" id="SM00320">
    <property type="entry name" value="WD40"/>
    <property type="match status" value="6"/>
</dbReference>
<dbReference type="SUPFAM" id="SSF50978">
    <property type="entry name" value="WD40 repeat-like"/>
    <property type="match status" value="1"/>
</dbReference>
<dbReference type="PROSITE" id="PS00678">
    <property type="entry name" value="WD_REPEATS_1"/>
    <property type="match status" value="1"/>
</dbReference>
<dbReference type="PROSITE" id="PS50082">
    <property type="entry name" value="WD_REPEATS_2"/>
    <property type="match status" value="2"/>
</dbReference>
<dbReference type="PROSITE" id="PS50294">
    <property type="entry name" value="WD_REPEATS_REGION"/>
    <property type="match status" value="1"/>
</dbReference>
<name>FIE_ARATH</name>
<feature type="chain" id="PRO_0000050977" description="Polycomb group protein FERTILIZATION-INDEPENDENT ENDOSPERM">
    <location>
        <begin position="1"/>
        <end position="369"/>
    </location>
</feature>
<feature type="repeat" description="WD 1">
    <location>
        <begin position="31"/>
        <end position="73"/>
    </location>
</feature>
<feature type="repeat" description="WD 2">
    <location>
        <begin position="81"/>
        <end position="123"/>
    </location>
</feature>
<feature type="repeat" description="WD 3">
    <location>
        <begin position="126"/>
        <end position="166"/>
    </location>
</feature>
<feature type="repeat" description="WD 4">
    <location>
        <begin position="172"/>
        <end position="212"/>
    </location>
</feature>
<feature type="repeat" description="WD 5">
    <location>
        <begin position="238"/>
        <end position="275"/>
    </location>
</feature>
<feature type="repeat" description="WD 6">
    <location>
        <begin position="287"/>
        <end position="328"/>
    </location>
</feature>
<feature type="repeat" description="WD 7">
    <location>
        <begin position="335"/>
        <end position="368"/>
    </location>
</feature>
<feature type="mutagenesis site" description="In fie-6; induces endosperm proliferation without fertilization. Abolishes interaction with MEA." evidence="1">
    <location>
        <begin position="365"/>
        <end position="369"/>
    </location>
</feature>
<evidence type="ECO:0000269" key="1">
    <source>
    </source>
</evidence>
<evidence type="ECO:0000269" key="2">
    <source>
    </source>
</evidence>
<evidence type="ECO:0000269" key="3">
    <source>
    </source>
</evidence>
<evidence type="ECO:0000269" key="4">
    <source>
    </source>
</evidence>
<evidence type="ECO:0000269" key="5">
    <source>
    </source>
</evidence>
<evidence type="ECO:0000269" key="6">
    <source>
    </source>
</evidence>
<evidence type="ECO:0000269" key="7">
    <source>
    </source>
</evidence>
<evidence type="ECO:0000269" key="8">
    <source>
    </source>
</evidence>
<evidence type="ECO:0000269" key="9">
    <source>
    </source>
</evidence>
<evidence type="ECO:0000269" key="10">
    <source>
    </source>
</evidence>
<evidence type="ECO:0000305" key="11"/>
<reference key="1">
    <citation type="journal article" date="1999" name="Plant Cell">
        <title>Mutations in FIE, a WD polycomb group gene, allow endosperm development without fertilization.</title>
        <authorList>
            <person name="Ohad N."/>
            <person name="Yadegari R."/>
            <person name="Margossian L."/>
            <person name="Hannon M."/>
            <person name="Michaeli D."/>
            <person name="Harada J.J."/>
            <person name="Goldberg R.B."/>
            <person name="Fischer R.L."/>
        </authorList>
    </citation>
    <scope>NUCLEOTIDE SEQUENCE [MRNA]</scope>
    <scope>FUNCTION</scope>
    <scope>TISSUE SPECIFICITY</scope>
    <scope>MUTAGENESIS OF 365-ASP--LYS-369</scope>
    <source>
        <strain>cv. Landsberg erecta</strain>
        <tissue>Flower</tissue>
    </source>
</reference>
<reference key="2">
    <citation type="journal article" date="2000" name="DNA Res.">
        <title>Structural analysis of Arabidopsis thaliana chromosome 3. I. Sequence features of the regions of 4,504,864 bp covered by sixty P1 and TAC clones.</title>
        <authorList>
            <person name="Sato S."/>
            <person name="Nakamura Y."/>
            <person name="Kaneko T."/>
            <person name="Katoh T."/>
            <person name="Asamizu E."/>
            <person name="Tabata S."/>
        </authorList>
    </citation>
    <scope>NUCLEOTIDE SEQUENCE [LARGE SCALE GENOMIC DNA]</scope>
    <source>
        <strain>cv. Columbia</strain>
    </source>
</reference>
<reference key="3">
    <citation type="journal article" date="2017" name="Plant J.">
        <title>Araport11: a complete reannotation of the Arabidopsis thaliana reference genome.</title>
        <authorList>
            <person name="Cheng C.Y."/>
            <person name="Krishnakumar V."/>
            <person name="Chan A.P."/>
            <person name="Thibaud-Nissen F."/>
            <person name="Schobel S."/>
            <person name="Town C.D."/>
        </authorList>
    </citation>
    <scope>GENOME REANNOTATION</scope>
    <source>
        <strain>cv. Columbia</strain>
    </source>
</reference>
<reference key="4">
    <citation type="journal article" date="2002" name="Science">
        <title>Functional annotation of a full-length Arabidopsis cDNA collection.</title>
        <authorList>
            <person name="Seki M."/>
            <person name="Narusaka M."/>
            <person name="Kamiya A."/>
            <person name="Ishida J."/>
            <person name="Satou M."/>
            <person name="Sakurai T."/>
            <person name="Nakajima M."/>
            <person name="Enju A."/>
            <person name="Akiyama K."/>
            <person name="Oono Y."/>
            <person name="Muramatsu M."/>
            <person name="Hayashizaki Y."/>
            <person name="Kawai J."/>
            <person name="Carninci P."/>
            <person name="Itoh M."/>
            <person name="Ishii Y."/>
            <person name="Arakawa T."/>
            <person name="Shibata K."/>
            <person name="Shinagawa A."/>
            <person name="Shinozaki K."/>
        </authorList>
    </citation>
    <scope>NUCLEOTIDE SEQUENCE [LARGE SCALE MRNA]</scope>
    <source>
        <strain>cv. Columbia</strain>
    </source>
</reference>
<reference key="5">
    <citation type="journal article" date="2003" name="Science">
        <title>Empirical analysis of transcriptional activity in the Arabidopsis genome.</title>
        <authorList>
            <person name="Yamada K."/>
            <person name="Lim J."/>
            <person name="Dale J.M."/>
            <person name="Chen H."/>
            <person name="Shinn P."/>
            <person name="Palm C.J."/>
            <person name="Southwick A.M."/>
            <person name="Wu H.C."/>
            <person name="Kim C.J."/>
            <person name="Nguyen M."/>
            <person name="Pham P.K."/>
            <person name="Cheuk R.F."/>
            <person name="Karlin-Newmann G."/>
            <person name="Liu S.X."/>
            <person name="Lam B."/>
            <person name="Sakano H."/>
            <person name="Wu T."/>
            <person name="Yu G."/>
            <person name="Miranda M."/>
            <person name="Quach H.L."/>
            <person name="Tripp M."/>
            <person name="Chang C.H."/>
            <person name="Lee J.M."/>
            <person name="Toriumi M.J."/>
            <person name="Chan M.M."/>
            <person name="Tang C.C."/>
            <person name="Onodera C.S."/>
            <person name="Deng J.M."/>
            <person name="Akiyama K."/>
            <person name="Ansari Y."/>
            <person name="Arakawa T."/>
            <person name="Banh J."/>
            <person name="Banno F."/>
            <person name="Bowser L."/>
            <person name="Brooks S.Y."/>
            <person name="Carninci P."/>
            <person name="Chao Q."/>
            <person name="Choy N."/>
            <person name="Enju A."/>
            <person name="Goldsmith A.D."/>
            <person name="Gurjal M."/>
            <person name="Hansen N.F."/>
            <person name="Hayashizaki Y."/>
            <person name="Johnson-Hopson C."/>
            <person name="Hsuan V.W."/>
            <person name="Iida K."/>
            <person name="Karnes M."/>
            <person name="Khan S."/>
            <person name="Koesema E."/>
            <person name="Ishida J."/>
            <person name="Jiang P.X."/>
            <person name="Jones T."/>
            <person name="Kawai J."/>
            <person name="Kamiya A."/>
            <person name="Meyers C."/>
            <person name="Nakajima M."/>
            <person name="Narusaka M."/>
            <person name="Seki M."/>
            <person name="Sakurai T."/>
            <person name="Satou M."/>
            <person name="Tamse R."/>
            <person name="Vaysberg M."/>
            <person name="Wallender E.K."/>
            <person name="Wong C."/>
            <person name="Yamamura Y."/>
            <person name="Yuan S."/>
            <person name="Shinozaki K."/>
            <person name="Davis R.W."/>
            <person name="Theologis A."/>
            <person name="Ecker J.R."/>
        </authorList>
    </citation>
    <scope>NUCLEOTIDE SEQUENCE [LARGE SCALE MRNA]</scope>
    <source>
        <strain>cv. Columbia</strain>
    </source>
</reference>
<reference key="6">
    <citation type="journal article" date="2000" name="Curr. Biol.">
        <title>Interaction of the Arabidopsis polycomb group proteins FIE and MEA mediates their common phenotypes.</title>
        <authorList>
            <person name="Spillane C."/>
            <person name="MacDougall C."/>
            <person name="Stock C."/>
            <person name="Koehler C."/>
            <person name="Vielle-Calzada J.-P."/>
            <person name="Nunes S.M."/>
            <person name="Grossniklaus U."/>
            <person name="Goodrich J."/>
        </authorList>
    </citation>
    <scope>INTERACTION WITH MEA</scope>
    <scope>SUBCELLULAR LOCATION</scope>
    <scope>TISSUE SPECIFICITY</scope>
</reference>
<reference key="7">
    <citation type="journal article" date="2000" name="Proc. Natl. Acad. Sci. U.S.A.">
        <title>Expression and parent-of-origin effects for FIS2, MEA, and FIE in the endosperm and embryo of developing Arabidopsis seeds.</title>
        <authorList>
            <person name="Luo M."/>
            <person name="Bilodeau P."/>
            <person name="Dennis E.S."/>
            <person name="Peacock W.J."/>
            <person name="Chaudhury A."/>
        </authorList>
    </citation>
    <scope>INTERACTION WITH MEA</scope>
    <scope>TISSUE SPECIFICITY</scope>
</reference>
<reference key="8">
    <citation type="journal article" date="2000" name="Plant Cell">
        <title>Mutations in the FIE and MEA genes that encode interacting polycomb proteins cause parent-of-origin effects on seed development by distinct mechanisms.</title>
        <authorList>
            <person name="Yadegari R."/>
            <person name="Kinoshita T."/>
            <person name="Lotan O."/>
            <person name="Cohen G."/>
            <person name="Katz A."/>
            <person name="Choi Y."/>
            <person name="Katz A."/>
            <person name="Nakashima K."/>
            <person name="Harada J.J."/>
            <person name="Goldberg R.B."/>
            <person name="Fischer R.L."/>
            <person name="Ohad N."/>
        </authorList>
    </citation>
    <scope>INTERACTION WITH MEA</scope>
    <scope>TISSUE SPECIFICITY</scope>
</reference>
<reference key="9">
    <citation type="journal article" date="2001" name="Curr. Biol.">
        <title>Polycomb group genes control pattern formation in plant seed.</title>
        <authorList>
            <person name="Soerensen M.B."/>
            <person name="Chaudhury A.M."/>
            <person name="Robert H."/>
            <person name="Bancharel E."/>
            <person name="Berger F."/>
        </authorList>
    </citation>
    <scope>FUNCTION</scope>
</reference>
<reference key="10">
    <citation type="journal article" date="2003" name="Genes Dev.">
        <title>The Polycomb-group protein MEDEA regulates seed development by controlling expression of the MADS-box gene PHERES1.</title>
        <authorList>
            <person name="Koehler C."/>
            <person name="Hennig L."/>
            <person name="Spillane C."/>
            <person name="Pien S."/>
            <person name="Gruissem W."/>
            <person name="Grossniklaus U."/>
        </authorList>
    </citation>
    <scope>FUNCTION</scope>
</reference>
<reference key="11">
    <citation type="journal article" date="2004" name="Development">
        <title>Identification of new members of fertilisation independent seed Polycomb group pathway involved in the control of seed development in Arabidopsis thaliana.</title>
        <authorList>
            <person name="Guitton A.-E."/>
            <person name="Page D.R."/>
            <person name="Chambrier P."/>
            <person name="Lionnet C."/>
            <person name="Faure J.-E."/>
            <person name="Grossniklaus U."/>
            <person name="Berger F."/>
        </authorList>
    </citation>
    <scope>FUNCTION</scope>
</reference>
<reference key="12">
    <citation type="journal article" date="2004" name="Plant J.">
        <title>FIE and CURLY LEAF polycomb proteins interact in the regulation of homeobox gene expression during sporophyte development.</title>
        <authorList>
            <person name="Katz A."/>
            <person name="Oliva M."/>
            <person name="Mosquna A."/>
            <person name="Hakim O."/>
            <person name="Ohad N."/>
        </authorList>
    </citation>
    <scope>INTERACTION WITH CLF</scope>
</reference>
<reference key="13">
    <citation type="journal article" date="2008" name="Proc. Natl. Acad. Sci. U.S.A.">
        <title>A PHD-polycomb repressive complex 2 triggers the epigenetic silencing of FLC during vernalization.</title>
        <authorList>
            <person name="De Lucia F."/>
            <person name="Crevillen P."/>
            <person name="Jones A.M.E."/>
            <person name="Greb T."/>
            <person name="Dean C."/>
        </authorList>
    </citation>
    <scope>SUBUNIT</scope>
    <scope>IDENTIFICATION BY MASS SPECTROMETRY</scope>
</reference>
<reference key="14">
    <citation type="journal article" date="2015" name="PLoS Genet.">
        <title>Kicking against the PRCs - A domesticated transposase antagonises silencing mediated by polycomb group proteins and is an accessory component of polycomb repressive complex 2.</title>
        <authorList>
            <person name="Liang S.C."/>
            <person name="Hartwig B."/>
            <person name="Perera P."/>
            <person name="Mora-Garcia S."/>
            <person name="de Leau E."/>
            <person name="Thornton H."/>
            <person name="de Lima Alves F."/>
            <person name="de Alves F.L."/>
            <person name="Rappsilber J."/>
            <person name="Rapsilber J."/>
            <person name="Yang S."/>
            <person name="James G.V."/>
            <person name="Schneeberger K."/>
            <person name="Finnegan E.J."/>
            <person name="Turck F."/>
            <person name="Goodrich J."/>
        </authorList>
    </citation>
    <scope>INTERACTION WITH ALP1</scope>
</reference>
<accession>Q9LT47</accession>
<accession>Q9XF44</accession>